<comment type="subcellular location">
    <subcellularLocation>
        <location>Cell inner membrane</location>
        <topology>Multi-pass membrane protein</topology>
    </subcellularLocation>
</comment>
<comment type="similarity">
    <text evidence="2">To P.aeruginosa GlpM.</text>
</comment>
<comment type="sequence caution" evidence="2">
    <conflict type="frameshift">
        <sequence resource="EMBL" id="U41101"/>
    </conflict>
</comment>
<reference key="1">
    <citation type="submission" date="1995-11" db="EMBL/GenBank/DDBJ databases">
        <authorList>
            <person name="Kuempel P.L."/>
        </authorList>
    </citation>
    <scope>NUCLEOTIDE SEQUENCE [GENOMIC DNA]</scope>
    <source>
        <strain>K12</strain>
    </source>
</reference>
<reference key="2">
    <citation type="journal article" date="1996" name="DNA Res.">
        <title>A 570-kb DNA sequence of the Escherichia coli K-12 genome corresponding to the 28.0-40.1 min region on the linkage map.</title>
        <authorList>
            <person name="Aiba H."/>
            <person name="Baba T."/>
            <person name="Fujita K."/>
            <person name="Hayashi K."/>
            <person name="Inada T."/>
            <person name="Isono K."/>
            <person name="Itoh T."/>
            <person name="Kasai H."/>
            <person name="Kashimoto K."/>
            <person name="Kimura S."/>
            <person name="Kitakawa M."/>
            <person name="Kitagawa M."/>
            <person name="Makino K."/>
            <person name="Miki T."/>
            <person name="Mizobuchi K."/>
            <person name="Mori H."/>
            <person name="Mori T."/>
            <person name="Motomura K."/>
            <person name="Nakade S."/>
            <person name="Nakamura Y."/>
            <person name="Nashimoto H."/>
            <person name="Nishio Y."/>
            <person name="Oshima T."/>
            <person name="Saito N."/>
            <person name="Sampei G."/>
            <person name="Seki Y."/>
            <person name="Sivasundaram S."/>
            <person name="Tagami H."/>
            <person name="Takeda J."/>
            <person name="Takemoto K."/>
            <person name="Takeuchi Y."/>
            <person name="Wada C."/>
            <person name="Yamamoto Y."/>
            <person name="Horiuchi T."/>
        </authorList>
    </citation>
    <scope>NUCLEOTIDE SEQUENCE [LARGE SCALE GENOMIC DNA]</scope>
    <source>
        <strain>K12 / W3110 / ATCC 27325 / DSM 5911</strain>
    </source>
</reference>
<reference key="3">
    <citation type="journal article" date="1997" name="Science">
        <title>The complete genome sequence of Escherichia coli K-12.</title>
        <authorList>
            <person name="Blattner F.R."/>
            <person name="Plunkett G. III"/>
            <person name="Bloch C.A."/>
            <person name="Perna N.T."/>
            <person name="Burland V."/>
            <person name="Riley M."/>
            <person name="Collado-Vides J."/>
            <person name="Glasner J.D."/>
            <person name="Rode C.K."/>
            <person name="Mayhew G.F."/>
            <person name="Gregor J."/>
            <person name="Davis N.W."/>
            <person name="Kirkpatrick H.A."/>
            <person name="Goeden M.A."/>
            <person name="Rose D.J."/>
            <person name="Mau B."/>
            <person name="Shao Y."/>
        </authorList>
    </citation>
    <scope>NUCLEOTIDE SEQUENCE [LARGE SCALE GENOMIC DNA]</scope>
    <source>
        <strain>K12 / MG1655 / ATCC 47076</strain>
    </source>
</reference>
<reference key="4">
    <citation type="journal article" date="2006" name="Mol. Syst. Biol.">
        <title>Highly accurate genome sequences of Escherichia coli K-12 strains MG1655 and W3110.</title>
        <authorList>
            <person name="Hayashi K."/>
            <person name="Morooka N."/>
            <person name="Yamamoto Y."/>
            <person name="Fujita K."/>
            <person name="Isono K."/>
            <person name="Choi S."/>
            <person name="Ohtsubo E."/>
            <person name="Baba T."/>
            <person name="Wanner B.L."/>
            <person name="Mori H."/>
            <person name="Horiuchi T."/>
        </authorList>
    </citation>
    <scope>NUCLEOTIDE SEQUENCE [LARGE SCALE GENOMIC DNA]</scope>
    <source>
        <strain>K12 / W3110 / ATCC 27325 / DSM 5911</strain>
    </source>
</reference>
<reference key="5">
    <citation type="unpublished observations" date="1996-01">
        <authorList>
            <person name="Rudd K.E."/>
        </authorList>
    </citation>
    <scope>IDENTIFICATION</scope>
</reference>
<reference key="6">
    <citation type="journal article" date="2005" name="Science">
        <title>Global topology analysis of the Escherichia coli inner membrane proteome.</title>
        <authorList>
            <person name="Daley D.O."/>
            <person name="Rapp M."/>
            <person name="Granseth E."/>
            <person name="Melen K."/>
            <person name="Drew D."/>
            <person name="von Heijne G."/>
        </authorList>
    </citation>
    <scope>TOPOLOGY [LARGE SCALE ANALYSIS]</scope>
    <source>
        <strain>K12 / MG1655 / ATCC 47076</strain>
    </source>
</reference>
<name>YDGC_ECOLI</name>
<dbReference type="EMBL" id="U41101">
    <property type="status" value="NOT_ANNOTATED_CDS"/>
    <property type="molecule type" value="Genomic_DNA"/>
</dbReference>
<dbReference type="EMBL" id="U00096">
    <property type="protein sequence ID" value="AAC74679.1"/>
    <property type="molecule type" value="Genomic_DNA"/>
</dbReference>
<dbReference type="EMBL" id="AP009048">
    <property type="protein sequence ID" value="BAA15345.1"/>
    <property type="molecule type" value="Genomic_DNA"/>
</dbReference>
<dbReference type="PIR" id="A64917">
    <property type="entry name" value="A64917"/>
</dbReference>
<dbReference type="RefSeq" id="NP_416124.1">
    <property type="nucleotide sequence ID" value="NC_000913.3"/>
</dbReference>
<dbReference type="RefSeq" id="WP_000524868.1">
    <property type="nucleotide sequence ID" value="NZ_STEB01000003.1"/>
</dbReference>
<dbReference type="BioGRID" id="4260253">
    <property type="interactions" value="4"/>
</dbReference>
<dbReference type="BioGRID" id="849544">
    <property type="interactions" value="1"/>
</dbReference>
<dbReference type="FunCoup" id="P0ACX0">
    <property type="interactions" value="27"/>
</dbReference>
<dbReference type="IntAct" id="P0ACX0">
    <property type="interactions" value="1"/>
</dbReference>
<dbReference type="STRING" id="511145.b1607"/>
<dbReference type="TCDB" id="9.B.72.1.2">
    <property type="family name" value="the 4 tms glpm (glpm) family"/>
</dbReference>
<dbReference type="PaxDb" id="511145-b1607"/>
<dbReference type="EnsemblBacteria" id="AAC74679">
    <property type="protein sequence ID" value="AAC74679"/>
    <property type="gene ID" value="b1607"/>
</dbReference>
<dbReference type="GeneID" id="945156"/>
<dbReference type="KEGG" id="ecj:JW1599"/>
<dbReference type="KEGG" id="eco:b1607"/>
<dbReference type="KEGG" id="ecoc:C3026_09250"/>
<dbReference type="PATRIC" id="fig|1411691.4.peg.655"/>
<dbReference type="EchoBASE" id="EB2983"/>
<dbReference type="eggNOG" id="COG3136">
    <property type="taxonomic scope" value="Bacteria"/>
</dbReference>
<dbReference type="HOGENOM" id="CLU_140962_0_0_6"/>
<dbReference type="InParanoid" id="P0ACX0"/>
<dbReference type="OMA" id="YFVYLAT"/>
<dbReference type="OrthoDB" id="6053681at2"/>
<dbReference type="PhylomeDB" id="P0ACX0"/>
<dbReference type="BioCyc" id="EcoCyc:G6863-MONOMER"/>
<dbReference type="PRO" id="PR:P0ACX0"/>
<dbReference type="Proteomes" id="UP000000625">
    <property type="component" value="Chromosome"/>
</dbReference>
<dbReference type="GO" id="GO:0005886">
    <property type="term" value="C:plasma membrane"/>
    <property type="evidence" value="ECO:0000314"/>
    <property type="project" value="EcoCyc"/>
</dbReference>
<dbReference type="InterPro" id="IPR009707">
    <property type="entry name" value="GlpM/YdgC"/>
</dbReference>
<dbReference type="Pfam" id="PF06942">
    <property type="entry name" value="GlpM"/>
    <property type="match status" value="1"/>
</dbReference>
<gene>
    <name type="primary">ydgC</name>
    <name type="ordered locus">b1607</name>
    <name type="ordered locus">JW1599</name>
</gene>
<feature type="chain" id="PRO_0000168969" description="Inner membrane protein YdgC">
    <location>
        <begin position="1"/>
        <end position="111"/>
    </location>
</feature>
<feature type="topological domain" description="Cytoplasmic" evidence="1">
    <location>
        <begin position="1"/>
        <end position="26"/>
    </location>
</feature>
<feature type="transmembrane region" description="Helical" evidence="1">
    <location>
        <begin position="27"/>
        <end position="47"/>
    </location>
</feature>
<feature type="topological domain" description="Periplasmic" evidence="1">
    <location>
        <begin position="48"/>
        <end position="58"/>
    </location>
</feature>
<feature type="transmembrane region" description="Helical" evidence="1">
    <location>
        <begin position="59"/>
        <end position="79"/>
    </location>
</feature>
<feature type="topological domain" description="Cytoplasmic" evidence="1">
    <location>
        <begin position="80"/>
        <end position="87"/>
    </location>
</feature>
<feature type="transmembrane region" description="Helical" evidence="1">
    <location>
        <begin position="88"/>
        <end position="108"/>
    </location>
</feature>
<feature type="topological domain" description="Periplasmic" evidence="1">
    <location>
        <begin position="109"/>
        <end position="111"/>
    </location>
</feature>
<keyword id="KW-0997">Cell inner membrane</keyword>
<keyword id="KW-1003">Cell membrane</keyword>
<keyword id="KW-0472">Membrane</keyword>
<keyword id="KW-1185">Reference proteome</keyword>
<keyword id="KW-0812">Transmembrane</keyword>
<keyword id="KW-1133">Transmembrane helix</keyword>
<proteinExistence type="evidence at protein level"/>
<organism>
    <name type="scientific">Escherichia coli (strain K12)</name>
    <dbReference type="NCBI Taxonomy" id="83333"/>
    <lineage>
        <taxon>Bacteria</taxon>
        <taxon>Pseudomonadati</taxon>
        <taxon>Pseudomonadota</taxon>
        <taxon>Gammaproteobacteria</taxon>
        <taxon>Enterobacterales</taxon>
        <taxon>Enterobacteriaceae</taxon>
        <taxon>Escherichia</taxon>
    </lineage>
</organism>
<protein>
    <recommendedName>
        <fullName>Inner membrane protein YdgC</fullName>
    </recommendedName>
</protein>
<evidence type="ECO:0000255" key="1"/>
<evidence type="ECO:0000305" key="2"/>
<accession>P0ACX0</accession>
<accession>P52110</accession>
<accession>P77466</accession>
<sequence length="111" mass="12323">MGLVIKAALGALVVLLIGVLAKTKNYYIAGLIPLFPTFALIAHYIVASERGIEALRATIIFSMWSIIPYFVYLVSLWYFTGMMRLPAAFVGSVACWGISAWVLIICWIKLH</sequence>